<keyword id="KW-1185">Reference proteome</keyword>
<accession>P36682</accession>
<accession>P75651</accession>
<accession>Q8KJQ5</accession>
<reference key="1">
    <citation type="journal article" date="1994" name="Nucleic Acids Res.">
        <title>Systematic sequencing of the Escherichia coli genome: analysis of the 2.4-4.1 min (110,917-193,643 bp) region.</title>
        <authorList>
            <person name="Fujita N."/>
            <person name="Mori H."/>
            <person name="Yura T."/>
            <person name="Ishihama A."/>
        </authorList>
    </citation>
    <scope>NUCLEOTIDE SEQUENCE [LARGE SCALE GENOMIC DNA]</scope>
    <source>
        <strain>K12 / W3110 / ATCC 27325 / DSM 5911</strain>
    </source>
</reference>
<reference key="2">
    <citation type="journal article" date="1997" name="Science">
        <title>The complete genome sequence of Escherichia coli K-12.</title>
        <authorList>
            <person name="Blattner F.R."/>
            <person name="Plunkett G. III"/>
            <person name="Bloch C.A."/>
            <person name="Perna N.T."/>
            <person name="Burland V."/>
            <person name="Riley M."/>
            <person name="Collado-Vides J."/>
            <person name="Glasner J.D."/>
            <person name="Rode C.K."/>
            <person name="Mayhew G.F."/>
            <person name="Gregor J."/>
            <person name="Davis N.W."/>
            <person name="Kirkpatrick H.A."/>
            <person name="Goeden M.A."/>
            <person name="Rose D.J."/>
            <person name="Mau B."/>
            <person name="Shao Y."/>
        </authorList>
    </citation>
    <scope>NUCLEOTIDE SEQUENCE [LARGE SCALE GENOMIC DNA]</scope>
    <source>
        <strain>K12 / MG1655 / ATCC 47076</strain>
    </source>
</reference>
<reference key="3">
    <citation type="journal article" date="2006" name="Mol. Syst. Biol.">
        <title>Highly accurate genome sequences of Escherichia coli K-12 strains MG1655 and W3110.</title>
        <authorList>
            <person name="Hayashi K."/>
            <person name="Morooka N."/>
            <person name="Yamamoto Y."/>
            <person name="Fujita K."/>
            <person name="Isono K."/>
            <person name="Choi S."/>
            <person name="Ohtsubo E."/>
            <person name="Baba T."/>
            <person name="Wanner B.L."/>
            <person name="Mori H."/>
            <person name="Horiuchi T."/>
        </authorList>
    </citation>
    <scope>NUCLEOTIDE SEQUENCE [LARGE SCALE GENOMIC DNA]</scope>
    <source>
        <strain>K12 / W3110 / ATCC 27325 / DSM 5911</strain>
    </source>
</reference>
<feature type="chain" id="PRO_0000168525" description="Uncharacterized protein YacH">
    <location>
        <begin position="1"/>
        <end position="617"/>
    </location>
</feature>
<feature type="region of interest" description="Disordered" evidence="1">
    <location>
        <begin position="387"/>
        <end position="419"/>
    </location>
</feature>
<feature type="region of interest" description="Disordered" evidence="1">
    <location>
        <begin position="443"/>
        <end position="599"/>
    </location>
</feature>
<feature type="compositionally biased region" description="Polar residues" evidence="1">
    <location>
        <begin position="387"/>
        <end position="396"/>
    </location>
</feature>
<feature type="compositionally biased region" description="Low complexity" evidence="1">
    <location>
        <begin position="404"/>
        <end position="414"/>
    </location>
</feature>
<feature type="compositionally biased region" description="Polar residues" evidence="1">
    <location>
        <begin position="453"/>
        <end position="474"/>
    </location>
</feature>
<feature type="compositionally biased region" description="Basic and acidic residues" evidence="1">
    <location>
        <begin position="490"/>
        <end position="499"/>
    </location>
</feature>
<feature type="compositionally biased region" description="Basic and acidic residues" evidence="1">
    <location>
        <begin position="522"/>
        <end position="531"/>
    </location>
</feature>
<feature type="compositionally biased region" description="Polar residues" evidence="1">
    <location>
        <begin position="549"/>
        <end position="570"/>
    </location>
</feature>
<feature type="compositionally biased region" description="Basic and acidic residues" evidence="1">
    <location>
        <begin position="572"/>
        <end position="585"/>
    </location>
</feature>
<feature type="compositionally biased region" description="Polar residues" evidence="1">
    <location>
        <begin position="586"/>
        <end position="599"/>
    </location>
</feature>
<feature type="sequence conflict" description="In Ref. 1." evidence="2" ref="1">
    <original>R</original>
    <variation>Q</variation>
    <location>
        <position position="523"/>
    </location>
</feature>
<name>YACH_ECOLI</name>
<sequence length="617" mass="69362">MKMTLPFKPHVLALICSAGLCAASTGLYIKSRTVEAPVEPQSTQLAVSDAAAVTFPATVSAPPVTPAVVKSAFSTAQIDQWVAPVALYPDALLSQVLMASTYPTNVAQAVQWSHDNPLKQGDAAIQAVSDQPWDASVKSLVAFPQLMALMGENPQWVQNLGDAFLAQPQDVMDSVQRLRQLAQQTGSLKSSTEQKVITTTKKAVPVKQTVTAPVIPSNTVLTANPVITEPATTVISIEPANPDVVYIPNYNPTVVYGNWANTAYPPVYLPPPAGEPFVDSFVRGFGYSMGVATTYALFSSIDWDDDDHDHHHHDNDDYHHHDGGHRDGNGWQHNGDNINIDVNNFNRITGEHLTDKNMAWRHNPNYRNGVPYHDQDMAKRFHQTDVNGGMSATQLPAPTRDSQRQAAANQFQQRTHAAPVITRDTQRQAAAQRFNEAEHYGSYDDFHDFSRRQPLTQQQKDAARQRYQSASPEQRQAVRERMQTNPKIQQRREAARERIQSASPEQRQAVREKMQTNPQNQQRRDAARERIQSASPEQRQVFKEKVQQRPLNQQQRDNARQRVQSASPEQRQVFREKVQESRPQRLNDSNHTVRLNNEQRSAVCERLSERGARRLER</sequence>
<proteinExistence type="predicted"/>
<evidence type="ECO:0000256" key="1">
    <source>
        <dbReference type="SAM" id="MobiDB-lite"/>
    </source>
</evidence>
<evidence type="ECO:0000305" key="2"/>
<dbReference type="EMBL" id="U00096">
    <property type="protein sequence ID" value="AAC73228.1"/>
    <property type="molecule type" value="Genomic_DNA"/>
</dbReference>
<dbReference type="EMBL" id="AP009048">
    <property type="protein sequence ID" value="BAB96689.2"/>
    <property type="molecule type" value="Genomic_DNA"/>
</dbReference>
<dbReference type="PIR" id="E64734">
    <property type="entry name" value="E64734"/>
</dbReference>
<dbReference type="RefSeq" id="NP_414659.1">
    <property type="nucleotide sequence ID" value="NC_000913.3"/>
</dbReference>
<dbReference type="RefSeq" id="WP_000784470.1">
    <property type="nucleotide sequence ID" value="NZ_LN832404.1"/>
</dbReference>
<dbReference type="SMR" id="P36682"/>
<dbReference type="BioGRID" id="4263143">
    <property type="interactions" value="10"/>
</dbReference>
<dbReference type="FunCoup" id="P36682">
    <property type="interactions" value="124"/>
</dbReference>
<dbReference type="IntAct" id="P36682">
    <property type="interactions" value="7"/>
</dbReference>
<dbReference type="STRING" id="511145.b0117"/>
<dbReference type="PaxDb" id="511145-b0117"/>
<dbReference type="EnsemblBacteria" id="AAC73228">
    <property type="protein sequence ID" value="AAC73228"/>
    <property type="gene ID" value="b0117"/>
</dbReference>
<dbReference type="GeneID" id="944868"/>
<dbReference type="KEGG" id="ecj:JW0113"/>
<dbReference type="KEGG" id="eco:b0117"/>
<dbReference type="KEGG" id="ecoc:C3026_00490"/>
<dbReference type="PATRIC" id="fig|511145.12.peg.119"/>
<dbReference type="EchoBASE" id="EB2221"/>
<dbReference type="eggNOG" id="COG3064">
    <property type="taxonomic scope" value="Bacteria"/>
</dbReference>
<dbReference type="HOGENOM" id="CLU_024625_3_1_6"/>
<dbReference type="InParanoid" id="P36682"/>
<dbReference type="OMA" id="QWVAPIA"/>
<dbReference type="OrthoDB" id="197257at2"/>
<dbReference type="PhylomeDB" id="P36682"/>
<dbReference type="BioCyc" id="EcoCyc:EG12315-MONOMER"/>
<dbReference type="PRO" id="PR:P36682"/>
<dbReference type="Proteomes" id="UP000000625">
    <property type="component" value="Chromosome"/>
</dbReference>
<dbReference type="InterPro" id="IPR021728">
    <property type="entry name" value="DUF3300"/>
</dbReference>
<dbReference type="PANTHER" id="PTHR40269:SF1">
    <property type="entry name" value="OUTER MEMBRANE PROTEIN"/>
    <property type="match status" value="1"/>
</dbReference>
<dbReference type="PANTHER" id="PTHR40269">
    <property type="entry name" value="OUTER MEMBRANE PROTEIN-RELATED"/>
    <property type="match status" value="1"/>
</dbReference>
<dbReference type="Pfam" id="PF11737">
    <property type="entry name" value="DUF3300"/>
    <property type="match status" value="1"/>
</dbReference>
<gene>
    <name type="primary">yacH</name>
    <name type="ordered locus">b0117</name>
    <name type="ordered locus">JW0113</name>
</gene>
<organism>
    <name type="scientific">Escherichia coli (strain K12)</name>
    <dbReference type="NCBI Taxonomy" id="83333"/>
    <lineage>
        <taxon>Bacteria</taxon>
        <taxon>Pseudomonadati</taxon>
        <taxon>Pseudomonadota</taxon>
        <taxon>Gammaproteobacteria</taxon>
        <taxon>Enterobacterales</taxon>
        <taxon>Enterobacteriaceae</taxon>
        <taxon>Escherichia</taxon>
    </lineage>
</organism>
<protein>
    <recommendedName>
        <fullName>Uncharacterized protein YacH</fullName>
    </recommendedName>
</protein>